<name>MTTB1_METAC</name>
<accession>Q8TTA9</accession>
<protein>
    <recommendedName>
        <fullName>Trimethylamine methyltransferase MttB1</fullName>
        <shortName>TMA methyltransferase 1</shortName>
        <ecNumber>2.1.1.250</ecNumber>
    </recommendedName>
    <alternativeName>
        <fullName>Trimethylamine--corrinoid protein methyltransferase 1</fullName>
    </alternativeName>
</protein>
<comment type="function">
    <text evidence="1">Catalyzes the transfer of a methyl group from trimethylamine to the corrinoid cofactor of MttC.</text>
</comment>
<comment type="catalytic activity">
    <reaction>
        <text>Co(I)-[trimethylamine-specific corrinoid protein] + trimethylamine + H(+) = methyl-Co(III)-[trimethylamine-specific corrinoid protein] + dimethylamine</text>
        <dbReference type="Rhea" id="RHEA:39287"/>
        <dbReference type="Rhea" id="RHEA-COMP:11124"/>
        <dbReference type="Rhea" id="RHEA-COMP:11126"/>
        <dbReference type="ChEBI" id="CHEBI:15378"/>
        <dbReference type="ChEBI" id="CHEBI:58040"/>
        <dbReference type="ChEBI" id="CHEBI:58389"/>
        <dbReference type="ChEBI" id="CHEBI:85033"/>
        <dbReference type="ChEBI" id="CHEBI:85035"/>
        <dbReference type="EC" id="2.1.1.250"/>
    </reaction>
</comment>
<comment type="pathway">
    <text>One-carbon metabolism; methanogenesis from trimethylamine.</text>
</comment>
<comment type="subunit">
    <text evidence="1">Can form a complex with MttC.</text>
</comment>
<comment type="similarity">
    <text evidence="2">Belongs to the trimethylamine methyltransferase family.</text>
</comment>
<gene>
    <name type="primary">mttB1</name>
    <name type="ordered locus">MA_0528</name>
</gene>
<sequence length="495" mass="53838">MAKNNAVAGFNALNGVELNLFTTDELKAIHYATMDVLMNPGVQVSDPEARQIFKENGCEVDEKTNVVKIPEYLVRRALQLAPSRFVLWGRDKKFNTVQECGGKVHWTCFGTGVKMCKYQDGKYVTVDSVEQDIADIAKLCDWAENIDYFSLPVSARDIAGQGAQDVHETLTPIANTAKHYHHIDPVGENVEYYRDIVTAYYGGDEEEARKKPIFSMLLCPTSPLELSVNACQVIIKGARFGMPVNVLSMAMSGGSSPVYLAGTLVTHNAEVLAGITLAQLTVPGTKVWYGSSTTTFDLKKGTAPVGSPELGLISASVAKLAQFYGLPAFVAGTOSDAKIPDNQAGHEKTMTCLLPALAGANTLYGAGMLELGMTFSMEQLVIDNDIIKMTKKALQGVPVNEETLAVESIQKVGIGNNFLALKQTRQLVNYPSDPMLIDRRMFGDWAAAGSKDLASAAHDKVVDVLKNHVVKPIDADILKDMQAVVDRADKAFRGM</sequence>
<evidence type="ECO:0000250" key="1"/>
<evidence type="ECO:0000305" key="2"/>
<feature type="initiator methionine" description="Removed" evidence="1">
    <location>
        <position position="1"/>
    </location>
</feature>
<feature type="chain" id="PRO_0000216572" description="Trimethylamine methyltransferase MttB1">
    <location>
        <begin position="2"/>
        <end position="495"/>
    </location>
</feature>
<feature type="non-standard amino acid" description="Pyrrolysine" evidence="1">
    <location>
        <position position="334"/>
    </location>
</feature>
<proteinExistence type="inferred from homology"/>
<dbReference type="EC" id="2.1.1.250"/>
<dbReference type="EMBL" id="AE010299">
    <property type="protein sequence ID" value="AAM03972.1"/>
    <property type="molecule type" value="Genomic_DNA"/>
</dbReference>
<dbReference type="STRING" id="188937.MA_0528"/>
<dbReference type="KEGG" id="mac:MA_0528"/>
<dbReference type="HOGENOM" id="CLU_033581_1_0_2"/>
<dbReference type="InParanoid" id="Q8TTA9"/>
<dbReference type="UniPathway" id="UPA00645"/>
<dbReference type="Proteomes" id="UP000002487">
    <property type="component" value="Chromosome"/>
</dbReference>
<dbReference type="GO" id="GO:0043834">
    <property type="term" value="F:trimethylamine methyltransferase activity"/>
    <property type="evidence" value="ECO:0007669"/>
    <property type="project" value="UniProtKB-EC"/>
</dbReference>
<dbReference type="GO" id="GO:0015948">
    <property type="term" value="P:methanogenesis"/>
    <property type="evidence" value="ECO:0007669"/>
    <property type="project" value="UniProtKB-KW"/>
</dbReference>
<dbReference type="GO" id="GO:0032259">
    <property type="term" value="P:methylation"/>
    <property type="evidence" value="ECO:0007669"/>
    <property type="project" value="UniProtKB-KW"/>
</dbReference>
<dbReference type="FunFam" id="3.20.20.480:FF:000001">
    <property type="entry name" value="Trimethylamine methyltransferase"/>
    <property type="match status" value="1"/>
</dbReference>
<dbReference type="Gene3D" id="3.20.20.480">
    <property type="entry name" value="Trimethylamine methyltransferase-like"/>
    <property type="match status" value="1"/>
</dbReference>
<dbReference type="InterPro" id="IPR038601">
    <property type="entry name" value="MttB-like_sf"/>
</dbReference>
<dbReference type="InterPro" id="IPR012740">
    <property type="entry name" value="MttB_Methanosar"/>
</dbReference>
<dbReference type="InterPro" id="IPR010426">
    <property type="entry name" value="MTTB_MeTrfase"/>
</dbReference>
<dbReference type="NCBIfam" id="TIGR02369">
    <property type="entry name" value="trimeth_pyl"/>
    <property type="match status" value="1"/>
</dbReference>
<dbReference type="Pfam" id="PF06253">
    <property type="entry name" value="MTTB"/>
    <property type="match status" value="1"/>
</dbReference>
<dbReference type="PIRSF" id="PIRSF037567">
    <property type="entry name" value="MTTB_MeTrfase"/>
    <property type="match status" value="1"/>
</dbReference>
<organism>
    <name type="scientific">Methanosarcina acetivorans (strain ATCC 35395 / DSM 2834 / JCM 12185 / C2A)</name>
    <dbReference type="NCBI Taxonomy" id="188937"/>
    <lineage>
        <taxon>Archaea</taxon>
        <taxon>Methanobacteriati</taxon>
        <taxon>Methanobacteriota</taxon>
        <taxon>Stenosarchaea group</taxon>
        <taxon>Methanomicrobia</taxon>
        <taxon>Methanosarcinales</taxon>
        <taxon>Methanosarcinaceae</taxon>
        <taxon>Methanosarcina</taxon>
    </lineage>
</organism>
<keyword id="KW-0484">Methanogenesis</keyword>
<keyword id="KW-0489">Methyltransferase</keyword>
<keyword id="KW-0669">Pyrrolysine</keyword>
<keyword id="KW-1185">Reference proteome</keyword>
<keyword id="KW-0808">Transferase</keyword>
<reference key="1">
    <citation type="journal article" date="2002" name="Genome Res.">
        <title>The genome of Methanosarcina acetivorans reveals extensive metabolic and physiological diversity.</title>
        <authorList>
            <person name="Galagan J.E."/>
            <person name="Nusbaum C."/>
            <person name="Roy A."/>
            <person name="Endrizzi M.G."/>
            <person name="Macdonald P."/>
            <person name="FitzHugh W."/>
            <person name="Calvo S."/>
            <person name="Engels R."/>
            <person name="Smirnov S."/>
            <person name="Atnoor D."/>
            <person name="Brown A."/>
            <person name="Allen N."/>
            <person name="Naylor J."/>
            <person name="Stange-Thomann N."/>
            <person name="DeArellano K."/>
            <person name="Johnson R."/>
            <person name="Linton L."/>
            <person name="McEwan P."/>
            <person name="McKernan K."/>
            <person name="Talamas J."/>
            <person name="Tirrell A."/>
            <person name="Ye W."/>
            <person name="Zimmer A."/>
            <person name="Barber R.D."/>
            <person name="Cann I."/>
            <person name="Graham D.E."/>
            <person name="Grahame D.A."/>
            <person name="Guss A.M."/>
            <person name="Hedderich R."/>
            <person name="Ingram-Smith C."/>
            <person name="Kuettner H.C."/>
            <person name="Krzycki J.A."/>
            <person name="Leigh J.A."/>
            <person name="Li W."/>
            <person name="Liu J."/>
            <person name="Mukhopadhyay B."/>
            <person name="Reeve J.N."/>
            <person name="Smith K."/>
            <person name="Springer T.A."/>
            <person name="Umayam L.A."/>
            <person name="White O."/>
            <person name="White R.H."/>
            <person name="de Macario E.C."/>
            <person name="Ferry J.G."/>
            <person name="Jarrell K.F."/>
            <person name="Jing H."/>
            <person name="Macario A.J.L."/>
            <person name="Paulsen I.T."/>
            <person name="Pritchett M."/>
            <person name="Sowers K.R."/>
            <person name="Swanson R.V."/>
            <person name="Zinder S.H."/>
            <person name="Lander E."/>
            <person name="Metcalf W.W."/>
            <person name="Birren B."/>
        </authorList>
    </citation>
    <scope>NUCLEOTIDE SEQUENCE [LARGE SCALE GENOMIC DNA]</scope>
    <source>
        <strain>ATCC 35395 / DSM 2834 / JCM 12185 / C2A</strain>
    </source>
</reference>